<evidence type="ECO:0000255" key="1">
    <source>
        <dbReference type="HAMAP-Rule" id="MF_03151"/>
    </source>
</evidence>
<proteinExistence type="inferred from homology"/>
<keyword id="KW-0067">ATP-binding</keyword>
<keyword id="KW-0436">Ligase</keyword>
<keyword id="KW-0472">Membrane</keyword>
<keyword id="KW-0496">Mitochondrion</keyword>
<keyword id="KW-0999">Mitochondrion inner membrane</keyword>
<keyword id="KW-0547">Nucleotide-binding</keyword>
<keyword id="KW-0648">Protein biosynthesis</keyword>
<keyword id="KW-1185">Reference proteome</keyword>
<name>GATF_KOMPG</name>
<feature type="chain" id="PRO_0000413405" description="Glutamyl-tRNA(Gln) amidotransferase subunit F, mitochondrial">
    <location>
        <begin position="1"/>
        <end position="152"/>
    </location>
</feature>
<dbReference type="EC" id="6.3.5.-" evidence="1"/>
<dbReference type="EMBL" id="FN392322">
    <property type="protein sequence ID" value="CAY71976.1"/>
    <property type="molecule type" value="Genomic_DNA"/>
</dbReference>
<dbReference type="RefSeq" id="XP_002494155.1">
    <property type="nucleotide sequence ID" value="XM_002494110.1"/>
</dbReference>
<dbReference type="SMR" id="C4R8Q1"/>
<dbReference type="FunCoup" id="C4R8Q1">
    <property type="interactions" value="78"/>
</dbReference>
<dbReference type="STRING" id="644223.C4R8Q1"/>
<dbReference type="EnsemblFungi" id="CAY71976">
    <property type="protein sequence ID" value="CAY71976"/>
    <property type="gene ID" value="PAS_chr4_0715"/>
</dbReference>
<dbReference type="GeneID" id="8200610"/>
<dbReference type="KEGG" id="ppa:PAS_chr4_0715"/>
<dbReference type="HOGENOM" id="CLU_120617_0_0_1"/>
<dbReference type="InParanoid" id="C4R8Q1"/>
<dbReference type="OrthoDB" id="4053592at2759"/>
<dbReference type="Proteomes" id="UP000000314">
    <property type="component" value="Chromosome 4"/>
</dbReference>
<dbReference type="GO" id="GO:0030956">
    <property type="term" value="C:glutamyl-tRNA(Gln) amidotransferase complex"/>
    <property type="evidence" value="ECO:0007669"/>
    <property type="project" value="UniProtKB-UniRule"/>
</dbReference>
<dbReference type="GO" id="GO:0005743">
    <property type="term" value="C:mitochondrial inner membrane"/>
    <property type="evidence" value="ECO:0007669"/>
    <property type="project" value="UniProtKB-SubCell"/>
</dbReference>
<dbReference type="GO" id="GO:0005524">
    <property type="term" value="F:ATP binding"/>
    <property type="evidence" value="ECO:0007669"/>
    <property type="project" value="UniProtKB-KW"/>
</dbReference>
<dbReference type="GO" id="GO:0050567">
    <property type="term" value="F:glutaminyl-tRNA synthase (glutamine-hydrolyzing) activity"/>
    <property type="evidence" value="ECO:0007669"/>
    <property type="project" value="UniProtKB-UniRule"/>
</dbReference>
<dbReference type="GO" id="GO:0070681">
    <property type="term" value="P:glutaminyl-tRNAGln biosynthesis via transamidation"/>
    <property type="evidence" value="ECO:0007669"/>
    <property type="project" value="UniProtKB-UniRule"/>
</dbReference>
<dbReference type="GO" id="GO:0032543">
    <property type="term" value="P:mitochondrial translation"/>
    <property type="evidence" value="ECO:0007669"/>
    <property type="project" value="UniProtKB-UniRule"/>
</dbReference>
<dbReference type="CDD" id="cd21422">
    <property type="entry name" value="GatF"/>
    <property type="match status" value="1"/>
</dbReference>
<dbReference type="HAMAP" id="MF_03151">
    <property type="entry name" value="GatF"/>
    <property type="match status" value="1"/>
</dbReference>
<dbReference type="InterPro" id="IPR027499">
    <property type="entry name" value="GatF"/>
</dbReference>
<dbReference type="Pfam" id="PF20977">
    <property type="entry name" value="GatF"/>
    <property type="match status" value="1"/>
</dbReference>
<sequence>MFRTAVRNYSSRVGQKFQSLEQIKEYLKKPTWDTKTLLKGSQKSLEIDTPKLHRLLQLSGLSTDLDAGKERQLLNDLNAQLTMMNKLQEIECKEFDLIETQHSPLKFQDIRNATGELRQSSKKGETGQWNPLDLASVKSEGFYVVNEKLGKE</sequence>
<comment type="function">
    <text evidence="1">Allows the formation of correctly charged Gln-tRNA(Gln) through the transamidation of misacylated Glu-tRNA(Gln) in the mitochondria. The reaction takes place in the presence of glutamine and ATP through an activated gamma-phospho-Glu-tRNA(Gln). Required for proper protein synthesis within the mitochondrion.</text>
</comment>
<comment type="catalytic activity">
    <reaction evidence="1">
        <text>L-glutamyl-tRNA(Gln) + L-glutamine + ATP + H2O = L-glutaminyl-tRNA(Gln) + L-glutamate + ADP + phosphate + H(+)</text>
        <dbReference type="Rhea" id="RHEA:17521"/>
        <dbReference type="Rhea" id="RHEA-COMP:9681"/>
        <dbReference type="Rhea" id="RHEA-COMP:9684"/>
        <dbReference type="ChEBI" id="CHEBI:15377"/>
        <dbReference type="ChEBI" id="CHEBI:15378"/>
        <dbReference type="ChEBI" id="CHEBI:29985"/>
        <dbReference type="ChEBI" id="CHEBI:30616"/>
        <dbReference type="ChEBI" id="CHEBI:43474"/>
        <dbReference type="ChEBI" id="CHEBI:58359"/>
        <dbReference type="ChEBI" id="CHEBI:78520"/>
        <dbReference type="ChEBI" id="CHEBI:78521"/>
        <dbReference type="ChEBI" id="CHEBI:456216"/>
    </reaction>
</comment>
<comment type="subunit">
    <text evidence="1">Subunit of the heterotrimeric GatFAB amidotransferase (AdT) complex, composed of A, B and F subunits.</text>
</comment>
<comment type="subcellular location">
    <subcellularLocation>
        <location evidence="1">Mitochondrion inner membrane</location>
        <topology evidence="1">Peripheral membrane protein</topology>
        <orientation evidence="1">Matrix side</orientation>
    </subcellularLocation>
</comment>
<comment type="miscellaneous">
    <text evidence="1">This protein may be expected to contain an N-terminal transit peptide but none has been predicted.</text>
</comment>
<comment type="similarity">
    <text evidence="1">Belongs to the GatF family.</text>
</comment>
<accession>C4R8Q1</accession>
<gene>
    <name evidence="1" type="primary">GTF1</name>
    <name type="ordered locus">PAS_chr4_0715</name>
</gene>
<protein>
    <recommendedName>
        <fullName evidence="1">Glutamyl-tRNA(Gln) amidotransferase subunit F, mitochondrial</fullName>
        <shortName evidence="1">Glu-AdT subunit F</shortName>
        <ecNumber evidence="1">6.3.5.-</ecNumber>
    </recommendedName>
</protein>
<reference key="1">
    <citation type="journal article" date="2009" name="Nat. Biotechnol.">
        <title>Genome sequence of the recombinant protein production host Pichia pastoris.</title>
        <authorList>
            <person name="De Schutter K."/>
            <person name="Lin Y.-C."/>
            <person name="Tiels P."/>
            <person name="Van Hecke A."/>
            <person name="Glinka S."/>
            <person name="Weber-Lehmann J."/>
            <person name="Rouze P."/>
            <person name="Van de Peer Y."/>
            <person name="Callewaert N."/>
        </authorList>
    </citation>
    <scope>NUCLEOTIDE SEQUENCE [LARGE SCALE GENOMIC DNA]</scope>
    <source>
        <strain>GS115 / ATCC 20864</strain>
    </source>
</reference>
<organism>
    <name type="scientific">Komagataella phaffii (strain GS115 / ATCC 20864)</name>
    <name type="common">Yeast</name>
    <name type="synonym">Pichia pastoris</name>
    <dbReference type="NCBI Taxonomy" id="644223"/>
    <lineage>
        <taxon>Eukaryota</taxon>
        <taxon>Fungi</taxon>
        <taxon>Dikarya</taxon>
        <taxon>Ascomycota</taxon>
        <taxon>Saccharomycotina</taxon>
        <taxon>Pichiomycetes</taxon>
        <taxon>Pichiales</taxon>
        <taxon>Pichiaceae</taxon>
        <taxon>Komagataella</taxon>
    </lineage>
</organism>